<reference key="1">
    <citation type="journal article" date="1998" name="DNA Res.">
        <title>Structural analysis of Arabidopsis thaliana chromosome 5. VI. Sequence features of the regions of 1,367,185 bp covered by 19 physically assigned P1 and TAC clones.</title>
        <authorList>
            <person name="Kotani H."/>
            <person name="Nakamura Y."/>
            <person name="Sato S."/>
            <person name="Asamizu E."/>
            <person name="Kaneko T."/>
            <person name="Miyajima N."/>
            <person name="Tabata S."/>
        </authorList>
    </citation>
    <scope>NUCLEOTIDE SEQUENCE [LARGE SCALE GENOMIC DNA]</scope>
    <source>
        <strain>cv. Columbia</strain>
    </source>
</reference>
<reference key="2">
    <citation type="journal article" date="2017" name="Plant J.">
        <title>Araport11: a complete reannotation of the Arabidopsis thaliana reference genome.</title>
        <authorList>
            <person name="Cheng C.Y."/>
            <person name="Krishnakumar V."/>
            <person name="Chan A.P."/>
            <person name="Thibaud-Nissen F."/>
            <person name="Schobel S."/>
            <person name="Town C.D."/>
        </authorList>
    </citation>
    <scope>GENOME REANNOTATION</scope>
    <source>
        <strain>cv. Columbia</strain>
    </source>
</reference>
<reference key="3">
    <citation type="submission" date="2004-12" db="EMBL/GenBank/DDBJ databases">
        <title>Arabidopsis ORF clones.</title>
        <authorList>
            <person name="Shinn P."/>
            <person name="Chen H."/>
            <person name="Cheuk R.F."/>
            <person name="Kim C.J."/>
            <person name="Ecker J.R."/>
        </authorList>
    </citation>
    <scope>NUCLEOTIDE SEQUENCE [LARGE SCALE MRNA]</scope>
    <source>
        <strain>cv. Columbia</strain>
    </source>
</reference>
<reference key="4">
    <citation type="journal article" date="2001" name="Plant Mol. Biol.">
        <title>Molecular cloning and expression in yeast of 2,3-oxidosqualene-triterpenoid cyclases from Arabidopsis thaliana.</title>
        <authorList>
            <person name="Husselstein-Muller T."/>
            <person name="Schaller H."/>
            <person name="Benveniste P."/>
        </authorList>
    </citation>
    <scope>IDENTIFICATION</scope>
    <scope>NOMENCLATURE</scope>
</reference>
<reference key="5">
    <citation type="journal article" date="2006" name="Angew. Chem. Int. Ed.">
        <title>An Arabidopsis oxidosqualene cyclase catalyzes iridal skeleton formation by Grob fragmentation.</title>
        <authorList>
            <person name="Xiong Q."/>
            <person name="Wilson W.K."/>
            <person name="Matsuda S.P.T."/>
        </authorList>
    </citation>
    <scope>FUNCTION</scope>
    <scope>CATALYTIC ACTIVITY</scope>
</reference>
<dbReference type="EC" id="5.4.99.53"/>
<dbReference type="EMBL" id="AB013391">
    <property type="protein sequence ID" value="BAB10498.1"/>
    <property type="molecule type" value="Genomic_DNA"/>
</dbReference>
<dbReference type="EMBL" id="CP002688">
    <property type="protein sequence ID" value="AED94834.1"/>
    <property type="molecule type" value="Genomic_DNA"/>
</dbReference>
<dbReference type="EMBL" id="BT020312">
    <property type="protein sequence ID" value="AAV85667.1"/>
    <property type="molecule type" value="mRNA"/>
</dbReference>
<dbReference type="EMBL" id="BT020456">
    <property type="protein sequence ID" value="AAW30034.1"/>
    <property type="molecule type" value="mRNA"/>
</dbReference>
<dbReference type="RefSeq" id="NP_199074.1">
    <property type="nucleotide sequence ID" value="NM_123624.4"/>
</dbReference>
<dbReference type="SMR" id="Q9FJV8"/>
<dbReference type="FunCoup" id="Q9FJV8">
    <property type="interactions" value="693"/>
</dbReference>
<dbReference type="STRING" id="3702.Q9FJV8"/>
<dbReference type="PaxDb" id="3702-AT5G42600.1"/>
<dbReference type="ProteomicsDB" id="236722"/>
<dbReference type="EnsemblPlants" id="AT5G42600.1">
    <property type="protein sequence ID" value="AT5G42600.1"/>
    <property type="gene ID" value="AT5G42600"/>
</dbReference>
<dbReference type="GeneID" id="834267"/>
<dbReference type="Gramene" id="AT5G42600.1">
    <property type="protein sequence ID" value="AT5G42600.1"/>
    <property type="gene ID" value="AT5G42600"/>
</dbReference>
<dbReference type="KEGG" id="ath:AT5G42600"/>
<dbReference type="Araport" id="AT5G42600"/>
<dbReference type="TAIR" id="AT5G42600">
    <property type="gene designation" value="MRN1"/>
</dbReference>
<dbReference type="eggNOG" id="KOG0497">
    <property type="taxonomic scope" value="Eukaryota"/>
</dbReference>
<dbReference type="HOGENOM" id="CLU_009074_2_0_1"/>
<dbReference type="InParanoid" id="Q9FJV8"/>
<dbReference type="PhylomeDB" id="Q9FJV8"/>
<dbReference type="BioCyc" id="MetaCyc:AT5G42600-MONOMER"/>
<dbReference type="BRENDA" id="5.4.99.53">
    <property type="organism ID" value="399"/>
</dbReference>
<dbReference type="PRO" id="PR:Q9FJV8"/>
<dbReference type="Proteomes" id="UP000006548">
    <property type="component" value="Chromosome 5"/>
</dbReference>
<dbReference type="ExpressionAtlas" id="Q9FJV8">
    <property type="expression patterns" value="baseline and differential"/>
</dbReference>
<dbReference type="GO" id="GO:0005783">
    <property type="term" value="C:endoplasmic reticulum"/>
    <property type="evidence" value="ECO:0000314"/>
    <property type="project" value="TAIR"/>
</dbReference>
<dbReference type="GO" id="GO:0005811">
    <property type="term" value="C:lipid droplet"/>
    <property type="evidence" value="ECO:0007669"/>
    <property type="project" value="InterPro"/>
</dbReference>
<dbReference type="GO" id="GO:0034074">
    <property type="term" value="F:marneral synthase activity"/>
    <property type="evidence" value="ECO:0000314"/>
    <property type="project" value="TAIR"/>
</dbReference>
<dbReference type="GO" id="GO:0016104">
    <property type="term" value="P:triterpenoid biosynthetic process"/>
    <property type="evidence" value="ECO:0000314"/>
    <property type="project" value="TAIR"/>
</dbReference>
<dbReference type="CDD" id="cd02892">
    <property type="entry name" value="SQCY_1"/>
    <property type="match status" value="1"/>
</dbReference>
<dbReference type="FunFam" id="1.50.10.20:FF:000011">
    <property type="entry name" value="Terpene cyclase/mutase family member"/>
    <property type="match status" value="1"/>
</dbReference>
<dbReference type="Gene3D" id="1.50.10.20">
    <property type="match status" value="2"/>
</dbReference>
<dbReference type="InterPro" id="IPR032696">
    <property type="entry name" value="SQ_cyclase_C"/>
</dbReference>
<dbReference type="InterPro" id="IPR032697">
    <property type="entry name" value="SQ_cyclase_N"/>
</dbReference>
<dbReference type="InterPro" id="IPR018333">
    <property type="entry name" value="Squalene_cyclase"/>
</dbReference>
<dbReference type="InterPro" id="IPR002365">
    <property type="entry name" value="Terpene_synthase_CS"/>
</dbReference>
<dbReference type="InterPro" id="IPR008930">
    <property type="entry name" value="Terpenoid_cyclase/PrenylTrfase"/>
</dbReference>
<dbReference type="NCBIfam" id="TIGR01787">
    <property type="entry name" value="squalene_cyclas"/>
    <property type="match status" value="1"/>
</dbReference>
<dbReference type="PANTHER" id="PTHR11764:SF49">
    <property type="entry name" value="ARABIDIOL SYNTHASE-RELATED"/>
    <property type="match status" value="1"/>
</dbReference>
<dbReference type="PANTHER" id="PTHR11764">
    <property type="entry name" value="TERPENE CYCLASE/MUTASE FAMILY MEMBER"/>
    <property type="match status" value="1"/>
</dbReference>
<dbReference type="Pfam" id="PF13243">
    <property type="entry name" value="SQHop_cyclase_C"/>
    <property type="match status" value="1"/>
</dbReference>
<dbReference type="Pfam" id="PF13249">
    <property type="entry name" value="SQHop_cyclase_N"/>
    <property type="match status" value="1"/>
</dbReference>
<dbReference type="SFLD" id="SFLDG01016">
    <property type="entry name" value="Prenyltransferase_Like_2"/>
    <property type="match status" value="1"/>
</dbReference>
<dbReference type="SUPFAM" id="SSF48239">
    <property type="entry name" value="Terpenoid cyclases/Protein prenyltransferases"/>
    <property type="match status" value="2"/>
</dbReference>
<dbReference type="PROSITE" id="PS01074">
    <property type="entry name" value="TERPENE_SYNTHASES"/>
    <property type="match status" value="1"/>
</dbReference>
<gene>
    <name type="primary">MRN1</name>
    <name type="synonym">PEN5</name>
    <name type="ordered locus">At5g42600</name>
    <name type="ORF">MFO20.1</name>
</gene>
<protein>
    <recommendedName>
        <fullName>Marneral synthase</fullName>
        <shortName>AtMRN1</shortName>
        <ecNumber>5.4.99.53</ecNumber>
    </recommendedName>
    <alternativeName>
        <fullName>Pentacyclic triterpene synthase 5</fullName>
        <shortName>AtPEN5</shortName>
    </alternativeName>
</protein>
<sequence length="761" mass="87207">MWRLRIGAEARQDPHLFTTNNFAGRQIWEFDANGGSPEELAEVEEARLNFANNKSRFKASPDLFWRRQFLREKKFEQKIPRVRIEDAEKITYEDAKTALRRGVLYYAACQANDGHWPSEVSGSMFLDAPFVICLYITGHLEKIFTLEHVKELLRYMYNTQNEDGGWGLDVESHSVMFCTVLNYICLRILGVEPDHDGQKSACARARKWILDHGGATYAPMVAKAWLSVLGVYDWSGCKPLPPEIWMLPSFSPINGGTLWIYIRDLLMGMSYLYGKKFVATPTALILQLREELYPQPYSKIIWSKARNRCAKEDLLYPKSFGQDLFWEGVHMLSENIINRWPLNKFVRQRALRTTMELVHYHDETTHYITGACVAKPFHMLACWVEDPDGDYFKKHLARVPDFIWIAEDGLKFQLMGMQSWNAALSLQVMLAANMDDEIRSTLIKGYDFLKQSQISENPQGDHLKMFRDITKGGWTFQDREQGLPISDGTAESIECCIHFHRMPSEFIGEKMDVEKLYDAVNFLIYLQSDNGGMPVWEPAPGKKWLEWLSPVEHVENTVVEQEYLECTGSVIAGLVCFKKEFPDHRPKEIEKLIKKGLKYIEDLQMPDGSWYGNWGVCFTYGTLFAVRGLAAAGKTFGNSEAIRRAVQFILNTQNAEGGWGESALSCPNKKYIPSKGNVTNVVNTGQAMMVLLIGGQMERDPSPVHRAAKVLINSQLDIGDFPQQERRGIYMNMLLHYPTYRNMFSLWALALYTNALRLLVS</sequence>
<name>PEN5_ARATH</name>
<keyword id="KW-0413">Isomerase</keyword>
<keyword id="KW-1185">Reference proteome</keyword>
<keyword id="KW-0677">Repeat</keyword>
<accession>Q9FJV8</accession>
<organism>
    <name type="scientific">Arabidopsis thaliana</name>
    <name type="common">Mouse-ear cress</name>
    <dbReference type="NCBI Taxonomy" id="3702"/>
    <lineage>
        <taxon>Eukaryota</taxon>
        <taxon>Viridiplantae</taxon>
        <taxon>Streptophyta</taxon>
        <taxon>Embryophyta</taxon>
        <taxon>Tracheophyta</taxon>
        <taxon>Spermatophyta</taxon>
        <taxon>Magnoliopsida</taxon>
        <taxon>eudicotyledons</taxon>
        <taxon>Gunneridae</taxon>
        <taxon>Pentapetalae</taxon>
        <taxon>rosids</taxon>
        <taxon>malvids</taxon>
        <taxon>Brassicales</taxon>
        <taxon>Brassicaceae</taxon>
        <taxon>Camelineae</taxon>
        <taxon>Arabidopsis</taxon>
    </lineage>
</organism>
<evidence type="ECO:0000250" key="1">
    <source>
        <dbReference type="UniProtKB" id="P48449"/>
    </source>
</evidence>
<evidence type="ECO:0000269" key="2">
    <source>
    </source>
</evidence>
<evidence type="ECO:0000305" key="3"/>
<comment type="function">
    <text evidence="2">Converts oxidosqualene to marneral.</text>
</comment>
<comment type="catalytic activity">
    <reaction evidence="2">
        <text>(S)-2,3-epoxysqualene = marneral</text>
        <dbReference type="Rhea" id="RHEA:31875"/>
        <dbReference type="ChEBI" id="CHEBI:15441"/>
        <dbReference type="ChEBI" id="CHEBI:63465"/>
        <dbReference type="EC" id="5.4.99.53"/>
    </reaction>
</comment>
<comment type="similarity">
    <text evidence="3">Belongs to the terpene cyclase/mutase family.</text>
</comment>
<feature type="chain" id="PRO_0000366140" description="Marneral synthase">
    <location>
        <begin position="1"/>
        <end position="761"/>
    </location>
</feature>
<feature type="repeat" description="PFTB 1">
    <location>
        <begin position="149"/>
        <end position="190"/>
    </location>
</feature>
<feature type="repeat" description="PFTB 2">
    <location>
        <begin position="516"/>
        <end position="568"/>
    </location>
</feature>
<feature type="repeat" description="PFTB 3">
    <location>
        <begin position="642"/>
        <end position="683"/>
    </location>
</feature>
<feature type="active site" description="Proton donor" evidence="1">
    <location>
        <position position="487"/>
    </location>
</feature>
<proteinExistence type="evidence at protein level"/>